<sequence>MNIIDNFEQENISKLTANKKIPDFEAGDTVKVTVKIIDKAIEKDGKEKLTERFQAYEGVVIAKRNRGITSSFLVRKISHGEGVERRFMTYSPIVHSIDVVKYGVVRRAKLYYLRHRNGKAARIRERHITSAKPKAVKS</sequence>
<accession>Q68XY0</accession>
<protein>
    <recommendedName>
        <fullName evidence="1">Large ribosomal subunit protein bL19</fullName>
    </recommendedName>
    <alternativeName>
        <fullName evidence="2">50S ribosomal protein L19</fullName>
    </alternativeName>
</protein>
<reference key="1">
    <citation type="journal article" date="2004" name="J. Bacteriol.">
        <title>Complete genome sequence of Rickettsia typhi and comparison with sequences of other Rickettsiae.</title>
        <authorList>
            <person name="McLeod M.P."/>
            <person name="Qin X."/>
            <person name="Karpathy S.E."/>
            <person name="Gioia J."/>
            <person name="Highlander S.K."/>
            <person name="Fox G.E."/>
            <person name="McNeill T.Z."/>
            <person name="Jiang H."/>
            <person name="Muzny D."/>
            <person name="Jacob L.S."/>
            <person name="Hawes A.C."/>
            <person name="Sodergren E."/>
            <person name="Gill R."/>
            <person name="Hume J."/>
            <person name="Morgan M."/>
            <person name="Fan G."/>
            <person name="Amin A.G."/>
            <person name="Gibbs R.A."/>
            <person name="Hong C."/>
            <person name="Yu X.-J."/>
            <person name="Walker D.H."/>
            <person name="Weinstock G.M."/>
        </authorList>
    </citation>
    <scope>NUCLEOTIDE SEQUENCE [LARGE SCALE GENOMIC DNA]</scope>
    <source>
        <strain>ATCC VR-144 / Wilmington</strain>
    </source>
</reference>
<comment type="function">
    <text evidence="1">This protein is located at the 30S-50S ribosomal subunit interface and may play a role in the structure and function of the aminoacyl-tRNA binding site.</text>
</comment>
<comment type="similarity">
    <text evidence="1">Belongs to the bacterial ribosomal protein bL19 family.</text>
</comment>
<gene>
    <name evidence="1" type="primary">rplS</name>
    <name type="ordered locus">RT0024</name>
</gene>
<dbReference type="EMBL" id="AE017197">
    <property type="protein sequence ID" value="AAU03512.1"/>
    <property type="molecule type" value="Genomic_DNA"/>
</dbReference>
<dbReference type="RefSeq" id="WP_011190499.1">
    <property type="nucleotide sequence ID" value="NC_006142.1"/>
</dbReference>
<dbReference type="SMR" id="Q68XY0"/>
<dbReference type="KEGG" id="rty:RT0024"/>
<dbReference type="eggNOG" id="COG0335">
    <property type="taxonomic scope" value="Bacteria"/>
</dbReference>
<dbReference type="HOGENOM" id="CLU_103507_1_0_5"/>
<dbReference type="OrthoDB" id="9803541at2"/>
<dbReference type="Proteomes" id="UP000000604">
    <property type="component" value="Chromosome"/>
</dbReference>
<dbReference type="GO" id="GO:0022625">
    <property type="term" value="C:cytosolic large ribosomal subunit"/>
    <property type="evidence" value="ECO:0007669"/>
    <property type="project" value="TreeGrafter"/>
</dbReference>
<dbReference type="GO" id="GO:0003735">
    <property type="term" value="F:structural constituent of ribosome"/>
    <property type="evidence" value="ECO:0007669"/>
    <property type="project" value="InterPro"/>
</dbReference>
<dbReference type="GO" id="GO:0006412">
    <property type="term" value="P:translation"/>
    <property type="evidence" value="ECO:0007669"/>
    <property type="project" value="UniProtKB-UniRule"/>
</dbReference>
<dbReference type="Gene3D" id="2.30.30.790">
    <property type="match status" value="1"/>
</dbReference>
<dbReference type="HAMAP" id="MF_00402">
    <property type="entry name" value="Ribosomal_bL19"/>
    <property type="match status" value="1"/>
</dbReference>
<dbReference type="InterPro" id="IPR001857">
    <property type="entry name" value="Ribosomal_bL19"/>
</dbReference>
<dbReference type="InterPro" id="IPR018257">
    <property type="entry name" value="Ribosomal_bL19_CS"/>
</dbReference>
<dbReference type="InterPro" id="IPR038657">
    <property type="entry name" value="Ribosomal_bL19_sf"/>
</dbReference>
<dbReference type="InterPro" id="IPR008991">
    <property type="entry name" value="Translation_prot_SH3-like_sf"/>
</dbReference>
<dbReference type="NCBIfam" id="TIGR01024">
    <property type="entry name" value="rplS_bact"/>
    <property type="match status" value="1"/>
</dbReference>
<dbReference type="PANTHER" id="PTHR15680:SF9">
    <property type="entry name" value="LARGE RIBOSOMAL SUBUNIT PROTEIN BL19M"/>
    <property type="match status" value="1"/>
</dbReference>
<dbReference type="PANTHER" id="PTHR15680">
    <property type="entry name" value="RIBOSOMAL PROTEIN L19"/>
    <property type="match status" value="1"/>
</dbReference>
<dbReference type="Pfam" id="PF01245">
    <property type="entry name" value="Ribosomal_L19"/>
    <property type="match status" value="1"/>
</dbReference>
<dbReference type="PIRSF" id="PIRSF002191">
    <property type="entry name" value="Ribosomal_L19"/>
    <property type="match status" value="1"/>
</dbReference>
<dbReference type="PRINTS" id="PR00061">
    <property type="entry name" value="RIBOSOMALL19"/>
</dbReference>
<dbReference type="SUPFAM" id="SSF50104">
    <property type="entry name" value="Translation proteins SH3-like domain"/>
    <property type="match status" value="1"/>
</dbReference>
<dbReference type="PROSITE" id="PS01015">
    <property type="entry name" value="RIBOSOMAL_L19"/>
    <property type="match status" value="1"/>
</dbReference>
<organism>
    <name type="scientific">Rickettsia typhi (strain ATCC VR-144 / Wilmington)</name>
    <dbReference type="NCBI Taxonomy" id="257363"/>
    <lineage>
        <taxon>Bacteria</taxon>
        <taxon>Pseudomonadati</taxon>
        <taxon>Pseudomonadota</taxon>
        <taxon>Alphaproteobacteria</taxon>
        <taxon>Rickettsiales</taxon>
        <taxon>Rickettsiaceae</taxon>
        <taxon>Rickettsieae</taxon>
        <taxon>Rickettsia</taxon>
        <taxon>typhus group</taxon>
    </lineage>
</organism>
<name>RL19_RICTY</name>
<proteinExistence type="inferred from homology"/>
<evidence type="ECO:0000255" key="1">
    <source>
        <dbReference type="HAMAP-Rule" id="MF_00402"/>
    </source>
</evidence>
<evidence type="ECO:0000305" key="2"/>
<keyword id="KW-0687">Ribonucleoprotein</keyword>
<keyword id="KW-0689">Ribosomal protein</keyword>
<feature type="chain" id="PRO_0000163520" description="Large ribosomal subunit protein bL19">
    <location>
        <begin position="1"/>
        <end position="138"/>
    </location>
</feature>